<dbReference type="EC" id="2.7.1.39" evidence="1"/>
<dbReference type="EMBL" id="BA000030">
    <property type="protein sequence ID" value="BAC70627.1"/>
    <property type="molecule type" value="Genomic_DNA"/>
</dbReference>
<dbReference type="RefSeq" id="WP_010984348.1">
    <property type="nucleotide sequence ID" value="NZ_JZJK01000090.1"/>
</dbReference>
<dbReference type="SMR" id="Q82J66"/>
<dbReference type="GeneID" id="41540000"/>
<dbReference type="KEGG" id="sma:SAVERM_2916"/>
<dbReference type="eggNOG" id="COG0083">
    <property type="taxonomic scope" value="Bacteria"/>
</dbReference>
<dbReference type="HOGENOM" id="CLU_041243_0_1_11"/>
<dbReference type="OrthoDB" id="9769912at2"/>
<dbReference type="UniPathway" id="UPA00050">
    <property type="reaction ID" value="UER00064"/>
</dbReference>
<dbReference type="Proteomes" id="UP000000428">
    <property type="component" value="Chromosome"/>
</dbReference>
<dbReference type="GO" id="GO:0005737">
    <property type="term" value="C:cytoplasm"/>
    <property type="evidence" value="ECO:0007669"/>
    <property type="project" value="UniProtKB-SubCell"/>
</dbReference>
<dbReference type="GO" id="GO:0005524">
    <property type="term" value="F:ATP binding"/>
    <property type="evidence" value="ECO:0007669"/>
    <property type="project" value="UniProtKB-UniRule"/>
</dbReference>
<dbReference type="GO" id="GO:0004413">
    <property type="term" value="F:homoserine kinase activity"/>
    <property type="evidence" value="ECO:0007669"/>
    <property type="project" value="UniProtKB-UniRule"/>
</dbReference>
<dbReference type="GO" id="GO:0009088">
    <property type="term" value="P:threonine biosynthetic process"/>
    <property type="evidence" value="ECO:0007669"/>
    <property type="project" value="UniProtKB-UniRule"/>
</dbReference>
<dbReference type="Gene3D" id="3.30.230.10">
    <property type="match status" value="1"/>
</dbReference>
<dbReference type="Gene3D" id="3.30.70.890">
    <property type="entry name" value="GHMP kinase, C-terminal domain"/>
    <property type="match status" value="1"/>
</dbReference>
<dbReference type="HAMAP" id="MF_00384">
    <property type="entry name" value="Homoser_kinase"/>
    <property type="match status" value="1"/>
</dbReference>
<dbReference type="InterPro" id="IPR013750">
    <property type="entry name" value="GHMP_kinase_C_dom"/>
</dbReference>
<dbReference type="InterPro" id="IPR036554">
    <property type="entry name" value="GHMP_kinase_C_sf"/>
</dbReference>
<dbReference type="InterPro" id="IPR006204">
    <property type="entry name" value="GHMP_kinase_N_dom"/>
</dbReference>
<dbReference type="InterPro" id="IPR006203">
    <property type="entry name" value="GHMP_knse_ATP-bd_CS"/>
</dbReference>
<dbReference type="InterPro" id="IPR000870">
    <property type="entry name" value="Homoserine_kinase"/>
</dbReference>
<dbReference type="InterPro" id="IPR020568">
    <property type="entry name" value="Ribosomal_Su5_D2-typ_SF"/>
</dbReference>
<dbReference type="InterPro" id="IPR014721">
    <property type="entry name" value="Ribsml_uS5_D2-typ_fold_subgr"/>
</dbReference>
<dbReference type="NCBIfam" id="TIGR00191">
    <property type="entry name" value="thrB"/>
    <property type="match status" value="1"/>
</dbReference>
<dbReference type="PANTHER" id="PTHR20861:SF1">
    <property type="entry name" value="HOMOSERINE KINASE"/>
    <property type="match status" value="1"/>
</dbReference>
<dbReference type="PANTHER" id="PTHR20861">
    <property type="entry name" value="HOMOSERINE/4-DIPHOSPHOCYTIDYL-2-C-METHYL-D-ERYTHRITOL KINASE"/>
    <property type="match status" value="1"/>
</dbReference>
<dbReference type="Pfam" id="PF08544">
    <property type="entry name" value="GHMP_kinases_C"/>
    <property type="match status" value="1"/>
</dbReference>
<dbReference type="Pfam" id="PF00288">
    <property type="entry name" value="GHMP_kinases_N"/>
    <property type="match status" value="1"/>
</dbReference>
<dbReference type="PIRSF" id="PIRSF000676">
    <property type="entry name" value="Homoser_kin"/>
    <property type="match status" value="1"/>
</dbReference>
<dbReference type="PRINTS" id="PR00958">
    <property type="entry name" value="HOMSERKINASE"/>
</dbReference>
<dbReference type="SUPFAM" id="SSF55060">
    <property type="entry name" value="GHMP Kinase, C-terminal domain"/>
    <property type="match status" value="1"/>
</dbReference>
<dbReference type="SUPFAM" id="SSF54211">
    <property type="entry name" value="Ribosomal protein S5 domain 2-like"/>
    <property type="match status" value="1"/>
</dbReference>
<dbReference type="PROSITE" id="PS00627">
    <property type="entry name" value="GHMP_KINASES_ATP"/>
    <property type="match status" value="1"/>
</dbReference>
<reference key="1">
    <citation type="journal article" date="2001" name="Proc. Natl. Acad. Sci. U.S.A.">
        <title>Genome sequence of an industrial microorganism Streptomyces avermitilis: deducing the ability of producing secondary metabolites.</title>
        <authorList>
            <person name="Omura S."/>
            <person name="Ikeda H."/>
            <person name="Ishikawa J."/>
            <person name="Hanamoto A."/>
            <person name="Takahashi C."/>
            <person name="Shinose M."/>
            <person name="Takahashi Y."/>
            <person name="Horikawa H."/>
            <person name="Nakazawa H."/>
            <person name="Osonoe T."/>
            <person name="Kikuchi H."/>
            <person name="Shiba T."/>
            <person name="Sakaki Y."/>
            <person name="Hattori M."/>
        </authorList>
    </citation>
    <scope>NUCLEOTIDE SEQUENCE [LARGE SCALE GENOMIC DNA]</scope>
    <source>
        <strain>ATCC 31267 / DSM 46492 / JCM 5070 / NBRC 14893 / NCIMB 12804 / NRRL 8165 / MA-4680</strain>
    </source>
</reference>
<reference key="2">
    <citation type="journal article" date="2003" name="Nat. Biotechnol.">
        <title>Complete genome sequence and comparative analysis of the industrial microorganism Streptomyces avermitilis.</title>
        <authorList>
            <person name="Ikeda H."/>
            <person name="Ishikawa J."/>
            <person name="Hanamoto A."/>
            <person name="Shinose M."/>
            <person name="Kikuchi H."/>
            <person name="Shiba T."/>
            <person name="Sakaki Y."/>
            <person name="Hattori M."/>
            <person name="Omura S."/>
        </authorList>
    </citation>
    <scope>NUCLEOTIDE SEQUENCE [LARGE SCALE GENOMIC DNA]</scope>
    <source>
        <strain>ATCC 31267 / DSM 46492 / JCM 5070 / NBRC 14893 / NCIMB 12804 / NRRL 8165 / MA-4680</strain>
    </source>
</reference>
<protein>
    <recommendedName>
        <fullName evidence="1">Homoserine kinase</fullName>
        <shortName evidence="1">HK</shortName>
        <shortName evidence="1">HSK</shortName>
        <ecNumber evidence="1">2.7.1.39</ecNumber>
    </recommendedName>
</protein>
<evidence type="ECO:0000255" key="1">
    <source>
        <dbReference type="HAMAP-Rule" id="MF_00384"/>
    </source>
</evidence>
<organism>
    <name type="scientific">Streptomyces avermitilis (strain ATCC 31267 / DSM 46492 / JCM 5070 / NBRC 14893 / NCIMB 12804 / NRRL 8165 / MA-4680)</name>
    <dbReference type="NCBI Taxonomy" id="227882"/>
    <lineage>
        <taxon>Bacteria</taxon>
        <taxon>Bacillati</taxon>
        <taxon>Actinomycetota</taxon>
        <taxon>Actinomycetes</taxon>
        <taxon>Kitasatosporales</taxon>
        <taxon>Streptomycetaceae</taxon>
        <taxon>Streptomyces</taxon>
    </lineage>
</organism>
<comment type="function">
    <text evidence="1">Catalyzes the ATP-dependent phosphorylation of L-homoserine to L-homoserine phosphate.</text>
</comment>
<comment type="catalytic activity">
    <reaction evidence="1">
        <text>L-homoserine + ATP = O-phospho-L-homoserine + ADP + H(+)</text>
        <dbReference type="Rhea" id="RHEA:13985"/>
        <dbReference type="ChEBI" id="CHEBI:15378"/>
        <dbReference type="ChEBI" id="CHEBI:30616"/>
        <dbReference type="ChEBI" id="CHEBI:57476"/>
        <dbReference type="ChEBI" id="CHEBI:57590"/>
        <dbReference type="ChEBI" id="CHEBI:456216"/>
        <dbReference type="EC" id="2.7.1.39"/>
    </reaction>
</comment>
<comment type="pathway">
    <text evidence="1">Amino-acid biosynthesis; L-threonine biosynthesis; L-threonine from L-aspartate: step 4/5.</text>
</comment>
<comment type="subcellular location">
    <subcellularLocation>
        <location evidence="1">Cytoplasm</location>
    </subcellularLocation>
</comment>
<comment type="similarity">
    <text evidence="1">Belongs to the GHMP kinase family. Homoserine kinase subfamily.</text>
</comment>
<gene>
    <name evidence="1" type="primary">thrB</name>
    <name type="ordered locus">SAV_2916</name>
</gene>
<sequence length="305" mass="31359">MAGPAFRAAAVRVRVPATSANLGPGFDALGLSLGLYDDVVVRVADSGLHIDIAGEGSETLPRDERHLLARSLRTAFDLLGGQPRGLEIVCANRIPHGRGLGSSSAAICAGIVAARAVTIGGDGKLDDTALLELATEIEGHPDNVAACLLGGFTLSWMEGGAARAIRMEPADSIVPVVFVPGKAVLTETARGLLPRSVPHVDAAANAGRAALLVEALTRRPELLLPATEDRLHQEYRAPAMPESMALVERLRADGIPAVISGAGPTVLALADEASADKVARLAGEGWAANRLSLDARGASVLPLAA</sequence>
<proteinExistence type="inferred from homology"/>
<keyword id="KW-0028">Amino-acid biosynthesis</keyword>
<keyword id="KW-0067">ATP-binding</keyword>
<keyword id="KW-0963">Cytoplasm</keyword>
<keyword id="KW-0418">Kinase</keyword>
<keyword id="KW-0547">Nucleotide-binding</keyword>
<keyword id="KW-1185">Reference proteome</keyword>
<keyword id="KW-0791">Threonine biosynthesis</keyword>
<keyword id="KW-0808">Transferase</keyword>
<accession>Q82J66</accession>
<feature type="chain" id="PRO_0000156616" description="Homoserine kinase">
    <location>
        <begin position="1"/>
        <end position="305"/>
    </location>
</feature>
<feature type="binding site" evidence="1">
    <location>
        <begin position="95"/>
        <end position="105"/>
    </location>
    <ligand>
        <name>ATP</name>
        <dbReference type="ChEBI" id="CHEBI:30616"/>
    </ligand>
</feature>
<name>KHSE_STRAW</name>